<dbReference type="EMBL" id="CP001390">
    <property type="protein sequence ID" value="ACM21965.1"/>
    <property type="molecule type" value="Genomic_DNA"/>
</dbReference>
<dbReference type="RefSeq" id="WP_012648692.1">
    <property type="nucleotide sequence ID" value="NC_011979.1"/>
</dbReference>
<dbReference type="SMR" id="B9M6U4"/>
<dbReference type="STRING" id="316067.Geob_3624"/>
<dbReference type="KEGG" id="geo:Geob_3624"/>
<dbReference type="eggNOG" id="COG0088">
    <property type="taxonomic scope" value="Bacteria"/>
</dbReference>
<dbReference type="HOGENOM" id="CLU_041575_5_2_7"/>
<dbReference type="OrthoDB" id="9803201at2"/>
<dbReference type="Proteomes" id="UP000007721">
    <property type="component" value="Chromosome"/>
</dbReference>
<dbReference type="GO" id="GO:1990904">
    <property type="term" value="C:ribonucleoprotein complex"/>
    <property type="evidence" value="ECO:0007669"/>
    <property type="project" value="UniProtKB-KW"/>
</dbReference>
<dbReference type="GO" id="GO:0005840">
    <property type="term" value="C:ribosome"/>
    <property type="evidence" value="ECO:0007669"/>
    <property type="project" value="UniProtKB-KW"/>
</dbReference>
<dbReference type="GO" id="GO:0019843">
    <property type="term" value="F:rRNA binding"/>
    <property type="evidence" value="ECO:0007669"/>
    <property type="project" value="UniProtKB-UniRule"/>
</dbReference>
<dbReference type="GO" id="GO:0003735">
    <property type="term" value="F:structural constituent of ribosome"/>
    <property type="evidence" value="ECO:0007669"/>
    <property type="project" value="InterPro"/>
</dbReference>
<dbReference type="GO" id="GO:0006412">
    <property type="term" value="P:translation"/>
    <property type="evidence" value="ECO:0007669"/>
    <property type="project" value="UniProtKB-UniRule"/>
</dbReference>
<dbReference type="Gene3D" id="3.40.1370.10">
    <property type="match status" value="1"/>
</dbReference>
<dbReference type="HAMAP" id="MF_01328_B">
    <property type="entry name" value="Ribosomal_uL4_B"/>
    <property type="match status" value="1"/>
</dbReference>
<dbReference type="InterPro" id="IPR002136">
    <property type="entry name" value="Ribosomal_uL4"/>
</dbReference>
<dbReference type="InterPro" id="IPR013005">
    <property type="entry name" value="Ribosomal_uL4-like"/>
</dbReference>
<dbReference type="InterPro" id="IPR023574">
    <property type="entry name" value="Ribosomal_uL4_dom_sf"/>
</dbReference>
<dbReference type="NCBIfam" id="TIGR03953">
    <property type="entry name" value="rplD_bact"/>
    <property type="match status" value="1"/>
</dbReference>
<dbReference type="PANTHER" id="PTHR10746">
    <property type="entry name" value="50S RIBOSOMAL PROTEIN L4"/>
    <property type="match status" value="1"/>
</dbReference>
<dbReference type="PANTHER" id="PTHR10746:SF6">
    <property type="entry name" value="LARGE RIBOSOMAL SUBUNIT PROTEIN UL4M"/>
    <property type="match status" value="1"/>
</dbReference>
<dbReference type="Pfam" id="PF00573">
    <property type="entry name" value="Ribosomal_L4"/>
    <property type="match status" value="1"/>
</dbReference>
<dbReference type="SUPFAM" id="SSF52166">
    <property type="entry name" value="Ribosomal protein L4"/>
    <property type="match status" value="1"/>
</dbReference>
<keyword id="KW-1185">Reference proteome</keyword>
<keyword id="KW-0687">Ribonucleoprotein</keyword>
<keyword id="KW-0689">Ribosomal protein</keyword>
<keyword id="KW-0694">RNA-binding</keyword>
<keyword id="KW-0699">rRNA-binding</keyword>
<proteinExistence type="inferred from homology"/>
<gene>
    <name evidence="1" type="primary">rplD</name>
    <name type="ordered locus">Geob_3624</name>
</gene>
<reference key="1">
    <citation type="submission" date="2009-01" db="EMBL/GenBank/DDBJ databases">
        <title>Complete sequence of Geobacter sp. FRC-32.</title>
        <authorList>
            <consortium name="US DOE Joint Genome Institute"/>
            <person name="Lucas S."/>
            <person name="Copeland A."/>
            <person name="Lapidus A."/>
            <person name="Glavina del Rio T."/>
            <person name="Dalin E."/>
            <person name="Tice H."/>
            <person name="Bruce D."/>
            <person name="Goodwin L."/>
            <person name="Pitluck S."/>
            <person name="Saunders E."/>
            <person name="Brettin T."/>
            <person name="Detter J.C."/>
            <person name="Han C."/>
            <person name="Larimer F."/>
            <person name="Land M."/>
            <person name="Hauser L."/>
            <person name="Kyrpides N."/>
            <person name="Ovchinnikova G."/>
            <person name="Kostka J."/>
            <person name="Richardson P."/>
        </authorList>
    </citation>
    <scope>NUCLEOTIDE SEQUENCE [LARGE SCALE GENOMIC DNA]</scope>
    <source>
        <strain>DSM 22248 / JCM 15807 / FRC-32</strain>
    </source>
</reference>
<accession>B9M6U4</accession>
<evidence type="ECO:0000255" key="1">
    <source>
        <dbReference type="HAMAP-Rule" id="MF_01328"/>
    </source>
</evidence>
<evidence type="ECO:0000256" key="2">
    <source>
        <dbReference type="SAM" id="MobiDB-lite"/>
    </source>
</evidence>
<evidence type="ECO:0000305" key="3"/>
<sequence length="207" mass="22794">MAKLDVYNTSHKKVGEIELSDAVFNDEVREYLIHEAVKIQLANRRAGTVAVKNRAAVSGSGKKPFKQKGTGQARQGCKRAPQYPGGGVAFGPQPKTYNLSMNKKARRAALRSALSLLFKNDKLTVLDAINLDTVSTKNFVGVLKGFSLDKALVVTDAENRNLELSARNIKNVKVLKTEGLNIFDLMKYQRVIFTENSVRKVEGALQS</sequence>
<feature type="chain" id="PRO_1000166007" description="Large ribosomal subunit protein uL4">
    <location>
        <begin position="1"/>
        <end position="207"/>
    </location>
</feature>
<feature type="region of interest" description="Disordered" evidence="2">
    <location>
        <begin position="59"/>
        <end position="78"/>
    </location>
</feature>
<organism>
    <name type="scientific">Geotalea daltonii (strain DSM 22248 / JCM 15807 / FRC-32)</name>
    <name type="common">Geobacter daltonii</name>
    <dbReference type="NCBI Taxonomy" id="316067"/>
    <lineage>
        <taxon>Bacteria</taxon>
        <taxon>Pseudomonadati</taxon>
        <taxon>Thermodesulfobacteriota</taxon>
        <taxon>Desulfuromonadia</taxon>
        <taxon>Geobacterales</taxon>
        <taxon>Geobacteraceae</taxon>
        <taxon>Geotalea</taxon>
    </lineage>
</organism>
<comment type="function">
    <text evidence="1">One of the primary rRNA binding proteins, this protein initially binds near the 5'-end of the 23S rRNA. It is important during the early stages of 50S assembly. It makes multiple contacts with different domains of the 23S rRNA in the assembled 50S subunit and ribosome.</text>
</comment>
<comment type="function">
    <text evidence="1">Forms part of the polypeptide exit tunnel.</text>
</comment>
<comment type="subunit">
    <text evidence="1">Part of the 50S ribosomal subunit.</text>
</comment>
<comment type="similarity">
    <text evidence="1">Belongs to the universal ribosomal protein uL4 family.</text>
</comment>
<name>RL4_GEODF</name>
<protein>
    <recommendedName>
        <fullName evidence="1">Large ribosomal subunit protein uL4</fullName>
    </recommendedName>
    <alternativeName>
        <fullName evidence="3">50S ribosomal protein L4</fullName>
    </alternativeName>
</protein>